<sequence>MSSKFMKSAAVLGTATLASLLLVACGSKTADKPADSGSSEVKELTVYVDEGYKSYIEEVAKAYEKEAGVKVTLKTGDALGGLDKLSLDNQSGNVPDVMMAPYDRVGSLGSDGQLSEVKLSDGAKTDDTTKSLVTAANGKVYGAPAVIESLVMYYNKDLVKDAPKTFADLENLAKDSKYAFAGEDGKTTAFLADWTNFYYTYGLLAGNGAYVFGQNGKDAKDIGLANDGSIVGINYAKSWYEKWPKGMQDTEGAGNLIQTQFQEGKTAAIIDGPWKAQAFKDAKVNYGVATIPTLPNGKEYAAFGGGKAWVIPQAVKNLEASQKFVDFLVATEQQKVLYDKTNEIPANTEARSYAEGKNDELTTAVIKQFKNTQPLPNISQMSAVWDPAKNMLFDAVSGQKDAKTAANDAVTLIKETIKQKFGE</sequence>
<proteinExistence type="evidence at protein level"/>
<gene>
    <name evidence="3 5" type="primary">malX</name>
    <name evidence="5" type="ordered locus">SP_2108</name>
</gene>
<dbReference type="EMBL" id="AE005672">
    <property type="protein sequence ID" value="AAK76167.1"/>
    <property type="molecule type" value="Genomic_DNA"/>
</dbReference>
<dbReference type="PIR" id="F95246">
    <property type="entry name" value="F95246"/>
</dbReference>
<dbReference type="RefSeq" id="WP_000095467.1">
    <property type="nucleotide sequence ID" value="NZ_CP155539.1"/>
</dbReference>
<dbReference type="PDB" id="2XD2">
    <property type="method" value="X-ray"/>
    <property type="resolution" value="2.90 A"/>
    <property type="chains" value="A/B=31-423"/>
</dbReference>
<dbReference type="PDB" id="2XD3">
    <property type="method" value="X-ray"/>
    <property type="resolution" value="2.00 A"/>
    <property type="chains" value="A=31-423"/>
</dbReference>
<dbReference type="PDBsum" id="2XD2"/>
<dbReference type="PDBsum" id="2XD3"/>
<dbReference type="SMR" id="P59213"/>
<dbReference type="PaxDb" id="170187-SP_2108"/>
<dbReference type="EnsemblBacteria" id="AAK76167">
    <property type="protein sequence ID" value="AAK76167"/>
    <property type="gene ID" value="SP_2108"/>
</dbReference>
<dbReference type="KEGG" id="spn:SP_2108"/>
<dbReference type="eggNOG" id="COG2182">
    <property type="taxonomic scope" value="Bacteria"/>
</dbReference>
<dbReference type="PhylomeDB" id="P59213"/>
<dbReference type="BioCyc" id="SPNE170187:G1FZB-2196-MONOMER"/>
<dbReference type="EvolutionaryTrace" id="P59213"/>
<dbReference type="Proteomes" id="UP000000585">
    <property type="component" value="Chromosome"/>
</dbReference>
<dbReference type="GO" id="GO:0055052">
    <property type="term" value="C:ATP-binding cassette (ABC) transporter complex, substrate-binding subunit-containing"/>
    <property type="evidence" value="ECO:0000305"/>
    <property type="project" value="UniProtKB"/>
</dbReference>
<dbReference type="GO" id="GO:0005886">
    <property type="term" value="C:plasma membrane"/>
    <property type="evidence" value="ECO:0000305"/>
    <property type="project" value="UniProtKB"/>
</dbReference>
<dbReference type="GO" id="GO:0042958">
    <property type="term" value="F:maltodextrin transmembrane transporter activity"/>
    <property type="evidence" value="ECO:0000305"/>
    <property type="project" value="UniProtKB"/>
</dbReference>
<dbReference type="GO" id="GO:2001071">
    <property type="term" value="F:maltoheptaose binding"/>
    <property type="evidence" value="ECO:0000314"/>
    <property type="project" value="UniProtKB"/>
</dbReference>
<dbReference type="GO" id="GO:0042956">
    <property type="term" value="P:maltodextrin transmembrane transport"/>
    <property type="evidence" value="ECO:0000315"/>
    <property type="project" value="UniProtKB"/>
</dbReference>
<dbReference type="GO" id="GO:0015768">
    <property type="term" value="P:maltose transport"/>
    <property type="evidence" value="ECO:0007669"/>
    <property type="project" value="TreeGrafter"/>
</dbReference>
<dbReference type="CDD" id="cd13658">
    <property type="entry name" value="PBP2_CMBP"/>
    <property type="match status" value="1"/>
</dbReference>
<dbReference type="Gene3D" id="3.40.190.10">
    <property type="entry name" value="Periplasmic binding protein-like II"/>
    <property type="match status" value="2"/>
</dbReference>
<dbReference type="InterPro" id="IPR006060">
    <property type="entry name" value="Maltose/Cyclodextrin-bd"/>
</dbReference>
<dbReference type="InterPro" id="IPR006059">
    <property type="entry name" value="SBP"/>
</dbReference>
<dbReference type="InterPro" id="IPR006061">
    <property type="entry name" value="SBP_1_CS"/>
</dbReference>
<dbReference type="PANTHER" id="PTHR30061">
    <property type="entry name" value="MALTOSE-BINDING PERIPLASMIC PROTEIN"/>
    <property type="match status" value="1"/>
</dbReference>
<dbReference type="PANTHER" id="PTHR30061:SF50">
    <property type="entry name" value="MALTOSE_MALTODEXTRIN-BINDING PERIPLASMIC PROTEIN"/>
    <property type="match status" value="1"/>
</dbReference>
<dbReference type="Pfam" id="PF13416">
    <property type="entry name" value="SBP_bac_8"/>
    <property type="match status" value="1"/>
</dbReference>
<dbReference type="PRINTS" id="PR00181">
    <property type="entry name" value="MALTOSEBP"/>
</dbReference>
<dbReference type="SUPFAM" id="SSF53850">
    <property type="entry name" value="Periplasmic binding protein-like II"/>
    <property type="match status" value="1"/>
</dbReference>
<dbReference type="PROSITE" id="PS51257">
    <property type="entry name" value="PROKAR_LIPOPROTEIN"/>
    <property type="match status" value="1"/>
</dbReference>
<dbReference type="PROSITE" id="PS01037">
    <property type="entry name" value="SBP_BACTERIAL_1"/>
    <property type="match status" value="1"/>
</dbReference>
<evidence type="ECO:0000269" key="1">
    <source>
    </source>
</evidence>
<evidence type="ECO:0000303" key="2">
    <source>
    </source>
</evidence>
<evidence type="ECO:0000303" key="3">
    <source>
    </source>
</evidence>
<evidence type="ECO:0000305" key="4"/>
<evidence type="ECO:0000312" key="5">
    <source>
        <dbReference type="EMBL" id="AAK76167.1"/>
    </source>
</evidence>
<evidence type="ECO:0007744" key="6">
    <source>
        <dbReference type="PDB" id="2XD3"/>
    </source>
</evidence>
<evidence type="ECO:0007829" key="7">
    <source>
        <dbReference type="PDB" id="2XD2"/>
    </source>
</evidence>
<evidence type="ECO:0007829" key="8">
    <source>
        <dbReference type="PDB" id="2XD3"/>
    </source>
</evidence>
<organism>
    <name type="scientific">Streptococcus pneumoniae serotype 4 (strain ATCC BAA-334 / TIGR4)</name>
    <dbReference type="NCBI Taxonomy" id="170187"/>
    <lineage>
        <taxon>Bacteria</taxon>
        <taxon>Bacillati</taxon>
        <taxon>Bacillota</taxon>
        <taxon>Bacilli</taxon>
        <taxon>Lactobacillales</taxon>
        <taxon>Streptococcaceae</taxon>
        <taxon>Streptococcus</taxon>
    </lineage>
</organism>
<name>MALX_STRPN</name>
<keyword id="KW-0002">3D-structure</keyword>
<keyword id="KW-1003">Cell membrane</keyword>
<keyword id="KW-0449">Lipoprotein</keyword>
<keyword id="KW-0472">Membrane</keyword>
<keyword id="KW-0564">Palmitate</keyword>
<keyword id="KW-1185">Reference proteome</keyword>
<keyword id="KW-0732">Signal</keyword>
<keyword id="KW-0762">Sugar transport</keyword>
<keyword id="KW-0813">Transport</keyword>
<comment type="function">
    <text evidence="1">Part of an ABC transporter complex involved in the uptake of maltodextrins. Binds glycogen-derived linear maltooligosaccharides increasing in size from maltotriose to maltooctaose with the highest affinity for maltotriose. Has a very weak affinity for maltose. Has also a very low affinity for maltotetraitol, indicating that the binding is selective for maltooligosaccharides with an intact reducing end.</text>
</comment>
<comment type="subcellular location">
    <subcellularLocation>
        <location evidence="4">Cell membrane</location>
        <topology evidence="4">Lipid-anchor</topology>
    </subcellularLocation>
</comment>
<comment type="induction">
    <text>By maltose.</text>
</comment>
<comment type="disruption phenotype">
    <text evidence="1">Grows readily on glucose and maltotriose, but is not able to grow on glycogen. Deletion mutant is still able to depolymerize glycogen to some extent resulting in alpha-glucooligosaccharides increasing in size from maltotetraose to maltooctaose and larger oligosaccharides. In contrast to the wild-type cells, which almost completely deplete alpha-glucooligosaccharides up to eight glucose units in length, only partially deplete oligosaccharides of 9-11 glucose units in length and which have little to no ability to deplete oligosaccharides longer than 11 glucose units in length, the most abundant alpha-glucooligosaccharides produced by the deletion mutant are maltopentaose, maltohexaose, and maltoheptaose.</text>
</comment>
<comment type="similarity">
    <text evidence="4">Belongs to the bacterial solute-binding protein 1 family.</text>
</comment>
<protein>
    <recommendedName>
        <fullName evidence="4">Maltooligosaccharide ABC transporter solute-binding lipoprotein</fullName>
    </recommendedName>
    <alternativeName>
        <fullName evidence="4">Maltodextrin-binding protein</fullName>
    </alternativeName>
    <alternativeName>
        <fullName evidence="2">Solute-binding protein MalX</fullName>
    </alternativeName>
</protein>
<reference key="1">
    <citation type="journal article" date="2001" name="Science">
        <title>Complete genome sequence of a virulent isolate of Streptococcus pneumoniae.</title>
        <authorList>
            <person name="Tettelin H."/>
            <person name="Nelson K.E."/>
            <person name="Paulsen I.T."/>
            <person name="Eisen J.A."/>
            <person name="Read T.D."/>
            <person name="Peterson S.N."/>
            <person name="Heidelberg J.F."/>
            <person name="DeBoy R.T."/>
            <person name="Haft D.H."/>
            <person name="Dodson R.J."/>
            <person name="Durkin A.S."/>
            <person name="Gwinn M.L."/>
            <person name="Kolonay J.F."/>
            <person name="Nelson W.C."/>
            <person name="Peterson J.D."/>
            <person name="Umayam L.A."/>
            <person name="White O."/>
            <person name="Salzberg S.L."/>
            <person name="Lewis M.R."/>
            <person name="Radune D."/>
            <person name="Holtzapple E.K."/>
            <person name="Khouri H.M."/>
            <person name="Wolf A.M."/>
            <person name="Utterback T.R."/>
            <person name="Hansen C.L."/>
            <person name="McDonald L.A."/>
            <person name="Feldblyum T.V."/>
            <person name="Angiuoli S.V."/>
            <person name="Dickinson T."/>
            <person name="Hickey E.K."/>
            <person name="Holt I.E."/>
            <person name="Loftus B.J."/>
            <person name="Yang F."/>
            <person name="Smith H.O."/>
            <person name="Venter J.C."/>
            <person name="Dougherty B.A."/>
            <person name="Morrison D.A."/>
            <person name="Hollingshead S.K."/>
            <person name="Fraser C.M."/>
        </authorList>
    </citation>
    <scope>NUCLEOTIDE SEQUENCE [LARGE SCALE GENOMIC DNA]</scope>
    <source>
        <strain>ATCC BAA-334 / TIGR4</strain>
    </source>
</reference>
<reference key="2">
    <citation type="journal article" date="1989" name="Gene">
        <title>The difficulty of cloning Streptococcus pneumoniae mal and ami loci in Escherichia coli: toxicity of malX and amiA gene products.</title>
        <authorList>
            <person name="Martin B."/>
            <person name="Alloing G."/>
            <person name="Boucraut C."/>
            <person name="Claverys J.-P."/>
        </authorList>
    </citation>
    <scope>PARTIAL NUCLEOTIDE SEQUENCE [GENOMIC DNA]</scope>
    <source>
        <strain>R6 / R800</strain>
    </source>
</reference>
<reference key="3">
    <citation type="journal article" date="2010" name="Mol. Microbiol.">
        <title>The molecular basis of glycogen breakdown and transport in Streptococcus pneumoniae.</title>
        <authorList>
            <person name="Abbott D.W."/>
            <person name="Higgins M.A."/>
            <person name="Hyrnuik S."/>
            <person name="Pluvinage B."/>
            <person name="Lammerts van Bueren A."/>
            <person name="Boraston A.B."/>
        </authorList>
    </citation>
    <scope>X-RAY CRYSTALLOGRAPHY (2.0 ANGSTROMS) OF 31-423 AND IN COMPLEX WITH MALTOHEPTAOSE</scope>
    <scope>FUNCTION</scope>
    <scope>DISRUPTION PHENOTYPE</scope>
</reference>
<feature type="signal peptide" evidence="4">
    <location>
        <begin position="1"/>
        <end position="24"/>
    </location>
</feature>
<feature type="chain" id="PRO_0000031698" description="Maltooligosaccharide ABC transporter solute-binding lipoprotein">
    <location>
        <begin position="25"/>
        <end position="423"/>
    </location>
</feature>
<feature type="binding site" evidence="1 6">
    <location>
        <position position="52"/>
    </location>
    <ligand>
        <name>substrate</name>
    </ligand>
</feature>
<feature type="binding site" evidence="1 6">
    <location>
        <position position="77"/>
    </location>
    <ligand>
        <name>substrate</name>
    </ligand>
</feature>
<feature type="binding site" evidence="1 6">
    <location>
        <position position="83"/>
    </location>
    <ligand>
        <name>substrate</name>
    </ligand>
</feature>
<feature type="binding site" evidence="1 6">
    <location>
        <begin position="103"/>
        <end position="104"/>
    </location>
    <ligand>
        <name>substrate</name>
    </ligand>
</feature>
<feature type="binding site" evidence="1 6">
    <location>
        <position position="148"/>
    </location>
    <ligand>
        <name>substrate</name>
    </ligand>
</feature>
<feature type="binding site" evidence="1 6">
    <location>
        <position position="193"/>
    </location>
    <ligand>
        <name>substrate</name>
    </ligand>
</feature>
<feature type="binding site" evidence="1 6">
    <location>
        <position position="196"/>
    </location>
    <ligand>
        <name>substrate</name>
    </ligand>
</feature>
<feature type="binding site" evidence="1 6">
    <location>
        <begin position="251"/>
        <end position="254"/>
    </location>
    <ligand>
        <name>substrate</name>
    </ligand>
</feature>
<feature type="binding site" evidence="1 6">
    <location>
        <position position="274"/>
    </location>
    <ligand>
        <name>substrate</name>
    </ligand>
</feature>
<feature type="binding site" evidence="1 6">
    <location>
        <position position="307"/>
    </location>
    <ligand>
        <name>substrate</name>
    </ligand>
</feature>
<feature type="lipid moiety-binding region" description="N-palmitoyl cysteine" evidence="4">
    <location>
        <position position="25"/>
    </location>
</feature>
<feature type="lipid moiety-binding region" description="S-diacylglycerol cysteine" evidence="4">
    <location>
        <position position="25"/>
    </location>
</feature>
<feature type="strand" evidence="8">
    <location>
        <begin position="45"/>
        <end position="48"/>
    </location>
</feature>
<feature type="helix" evidence="8">
    <location>
        <begin position="50"/>
        <end position="52"/>
    </location>
</feature>
<feature type="helix" evidence="8">
    <location>
        <begin position="53"/>
        <end position="66"/>
    </location>
</feature>
<feature type="strand" evidence="8">
    <location>
        <begin position="72"/>
        <end position="75"/>
    </location>
</feature>
<feature type="helix" evidence="8">
    <location>
        <begin position="78"/>
        <end position="83"/>
    </location>
</feature>
<feature type="helix" evidence="8">
    <location>
        <begin position="85"/>
        <end position="91"/>
    </location>
</feature>
<feature type="strand" evidence="8">
    <location>
        <begin position="96"/>
        <end position="101"/>
    </location>
</feature>
<feature type="helix" evidence="8">
    <location>
        <begin position="102"/>
        <end position="110"/>
    </location>
</feature>
<feature type="helix" evidence="8">
    <location>
        <begin position="121"/>
        <end position="123"/>
    </location>
</feature>
<feature type="helix" evidence="8">
    <location>
        <begin position="127"/>
        <end position="133"/>
    </location>
</feature>
<feature type="strand" evidence="8">
    <location>
        <begin position="143"/>
        <end position="148"/>
    </location>
</feature>
<feature type="strand" evidence="8">
    <location>
        <begin position="151"/>
        <end position="155"/>
    </location>
</feature>
<feature type="turn" evidence="8">
    <location>
        <begin position="156"/>
        <end position="158"/>
    </location>
</feature>
<feature type="helix" evidence="8">
    <location>
        <begin position="166"/>
        <end position="174"/>
    </location>
</feature>
<feature type="helix" evidence="8">
    <location>
        <begin position="176"/>
        <end position="178"/>
    </location>
</feature>
<feature type="strand" evidence="7">
    <location>
        <begin position="183"/>
        <end position="185"/>
    </location>
</feature>
<feature type="strand" evidence="8">
    <location>
        <begin position="189"/>
        <end position="191"/>
    </location>
</feature>
<feature type="helix" evidence="8">
    <location>
        <begin position="197"/>
        <end position="206"/>
    </location>
</feature>
<feature type="strand" evidence="8">
    <location>
        <begin position="210"/>
        <end position="212"/>
    </location>
</feature>
<feature type="helix" evidence="8">
    <location>
        <begin position="213"/>
        <end position="216"/>
    </location>
</feature>
<feature type="strand" evidence="8">
    <location>
        <begin position="218"/>
        <end position="223"/>
    </location>
</feature>
<feature type="helix" evidence="8">
    <location>
        <begin position="227"/>
        <end position="240"/>
    </location>
</feature>
<feature type="helix" evidence="8">
    <location>
        <begin position="245"/>
        <end position="248"/>
    </location>
</feature>
<feature type="helix" evidence="8">
    <location>
        <begin position="253"/>
        <end position="262"/>
    </location>
</feature>
<feature type="strand" evidence="8">
    <location>
        <begin position="267"/>
        <end position="271"/>
    </location>
</feature>
<feature type="helix" evidence="8">
    <location>
        <begin position="273"/>
        <end position="275"/>
    </location>
</feature>
<feature type="helix" evidence="8">
    <location>
        <begin position="276"/>
        <end position="281"/>
    </location>
</feature>
<feature type="strand" evidence="8">
    <location>
        <begin position="286"/>
        <end position="289"/>
    </location>
</feature>
<feature type="strand" evidence="8">
    <location>
        <begin position="303"/>
        <end position="310"/>
    </location>
</feature>
<feature type="helix" evidence="8">
    <location>
        <begin position="318"/>
        <end position="329"/>
    </location>
</feature>
<feature type="helix" evidence="8">
    <location>
        <begin position="331"/>
        <end position="341"/>
    </location>
</feature>
<feature type="strand" evidence="8">
    <location>
        <begin position="344"/>
        <end position="347"/>
    </location>
</feature>
<feature type="helix" evidence="8">
    <location>
        <begin position="348"/>
        <end position="357"/>
    </location>
</feature>
<feature type="helix" evidence="8">
    <location>
        <begin position="360"/>
        <end position="370"/>
    </location>
</feature>
<feature type="helix" evidence="8">
    <location>
        <begin position="379"/>
        <end position="383"/>
    </location>
</feature>
<feature type="helix" evidence="8">
    <location>
        <begin position="385"/>
        <end position="396"/>
    </location>
</feature>
<feature type="helix" evidence="8">
    <location>
        <begin position="402"/>
        <end position="416"/>
    </location>
</feature>
<accession>P59213</accession>
<accession>P29850</accession>